<organism>
    <name type="scientific">Frankia casuarinae (strain DSM 45818 / CECT 9043 / HFP020203 / CcI3)</name>
    <dbReference type="NCBI Taxonomy" id="106370"/>
    <lineage>
        <taxon>Bacteria</taxon>
        <taxon>Bacillati</taxon>
        <taxon>Actinomycetota</taxon>
        <taxon>Actinomycetes</taxon>
        <taxon>Frankiales</taxon>
        <taxon>Frankiaceae</taxon>
        <taxon>Frankia</taxon>
    </lineage>
</organism>
<dbReference type="EC" id="2.5.1.75" evidence="1"/>
<dbReference type="EMBL" id="CP000249">
    <property type="protein sequence ID" value="ABD12869.1"/>
    <property type="molecule type" value="Genomic_DNA"/>
</dbReference>
<dbReference type="SMR" id="Q2J773"/>
<dbReference type="STRING" id="106370.Francci3_3516"/>
<dbReference type="KEGG" id="fra:Francci3_3516"/>
<dbReference type="eggNOG" id="COG0324">
    <property type="taxonomic scope" value="Bacteria"/>
</dbReference>
<dbReference type="HOGENOM" id="CLU_032616_0_1_11"/>
<dbReference type="PhylomeDB" id="Q2J773"/>
<dbReference type="Proteomes" id="UP000001937">
    <property type="component" value="Chromosome"/>
</dbReference>
<dbReference type="GO" id="GO:0005524">
    <property type="term" value="F:ATP binding"/>
    <property type="evidence" value="ECO:0007669"/>
    <property type="project" value="UniProtKB-UniRule"/>
</dbReference>
<dbReference type="GO" id="GO:0052381">
    <property type="term" value="F:tRNA dimethylallyltransferase activity"/>
    <property type="evidence" value="ECO:0007669"/>
    <property type="project" value="UniProtKB-UniRule"/>
</dbReference>
<dbReference type="GO" id="GO:0006400">
    <property type="term" value="P:tRNA modification"/>
    <property type="evidence" value="ECO:0007669"/>
    <property type="project" value="TreeGrafter"/>
</dbReference>
<dbReference type="FunFam" id="1.10.20.140:FF:000001">
    <property type="entry name" value="tRNA dimethylallyltransferase"/>
    <property type="match status" value="1"/>
</dbReference>
<dbReference type="Gene3D" id="1.10.20.140">
    <property type="match status" value="1"/>
</dbReference>
<dbReference type="Gene3D" id="3.40.50.300">
    <property type="entry name" value="P-loop containing nucleotide triphosphate hydrolases"/>
    <property type="match status" value="1"/>
</dbReference>
<dbReference type="HAMAP" id="MF_00185">
    <property type="entry name" value="IPP_trans"/>
    <property type="match status" value="1"/>
</dbReference>
<dbReference type="InterPro" id="IPR039657">
    <property type="entry name" value="Dimethylallyltransferase"/>
</dbReference>
<dbReference type="InterPro" id="IPR018022">
    <property type="entry name" value="IPT"/>
</dbReference>
<dbReference type="InterPro" id="IPR027417">
    <property type="entry name" value="P-loop_NTPase"/>
</dbReference>
<dbReference type="NCBIfam" id="TIGR00174">
    <property type="entry name" value="miaA"/>
    <property type="match status" value="1"/>
</dbReference>
<dbReference type="PANTHER" id="PTHR11088">
    <property type="entry name" value="TRNA DIMETHYLALLYLTRANSFERASE"/>
    <property type="match status" value="1"/>
</dbReference>
<dbReference type="PANTHER" id="PTHR11088:SF60">
    <property type="entry name" value="TRNA DIMETHYLALLYLTRANSFERASE"/>
    <property type="match status" value="1"/>
</dbReference>
<dbReference type="Pfam" id="PF01715">
    <property type="entry name" value="IPPT"/>
    <property type="match status" value="1"/>
</dbReference>
<dbReference type="SUPFAM" id="SSF52540">
    <property type="entry name" value="P-loop containing nucleoside triphosphate hydrolases"/>
    <property type="match status" value="1"/>
</dbReference>
<keyword id="KW-0067">ATP-binding</keyword>
<keyword id="KW-0460">Magnesium</keyword>
<keyword id="KW-0547">Nucleotide-binding</keyword>
<keyword id="KW-1185">Reference proteome</keyword>
<keyword id="KW-0808">Transferase</keyword>
<keyword id="KW-0819">tRNA processing</keyword>
<name>MIAA_FRACC</name>
<evidence type="ECO:0000255" key="1">
    <source>
        <dbReference type="HAMAP-Rule" id="MF_00185"/>
    </source>
</evidence>
<protein>
    <recommendedName>
        <fullName evidence="1">tRNA dimethylallyltransferase</fullName>
        <ecNumber evidence="1">2.5.1.75</ecNumber>
    </recommendedName>
    <alternativeName>
        <fullName evidence="1">Dimethylallyl diphosphate:tRNA dimethylallyltransferase</fullName>
        <shortName evidence="1">DMAPP:tRNA dimethylallyltransferase</shortName>
        <shortName evidence="1">DMATase</shortName>
    </alternativeName>
    <alternativeName>
        <fullName evidence="1">Isopentenyl-diphosphate:tRNA isopentenyltransferase</fullName>
        <shortName evidence="1">IPP transferase</shortName>
        <shortName evidence="1">IPPT</shortName>
        <shortName evidence="1">IPTase</shortName>
    </alternativeName>
</protein>
<gene>
    <name evidence="1" type="primary">miaA</name>
    <name type="ordered locus">Francci3_3516</name>
</gene>
<comment type="function">
    <text evidence="1">Catalyzes the transfer of a dimethylallyl group onto the adenine at position 37 in tRNAs that read codons beginning with uridine, leading to the formation of N6-(dimethylallyl)adenosine (i(6)A).</text>
</comment>
<comment type="catalytic activity">
    <reaction evidence="1">
        <text>adenosine(37) in tRNA + dimethylallyl diphosphate = N(6)-dimethylallyladenosine(37) in tRNA + diphosphate</text>
        <dbReference type="Rhea" id="RHEA:26482"/>
        <dbReference type="Rhea" id="RHEA-COMP:10162"/>
        <dbReference type="Rhea" id="RHEA-COMP:10375"/>
        <dbReference type="ChEBI" id="CHEBI:33019"/>
        <dbReference type="ChEBI" id="CHEBI:57623"/>
        <dbReference type="ChEBI" id="CHEBI:74411"/>
        <dbReference type="ChEBI" id="CHEBI:74415"/>
        <dbReference type="EC" id="2.5.1.75"/>
    </reaction>
</comment>
<comment type="cofactor">
    <cofactor evidence="1">
        <name>Mg(2+)</name>
        <dbReference type="ChEBI" id="CHEBI:18420"/>
    </cofactor>
</comment>
<comment type="subunit">
    <text evidence="1">Monomer.</text>
</comment>
<comment type="similarity">
    <text evidence="1">Belongs to the IPP transferase family.</text>
</comment>
<sequence>MAVVGPTAGGKSDLGIEIALALGGEVVNADSMQLYRGMDIGTAKVPEAERRGVPHHLLDVWDVTHPADVASFQADARRIIDGLLAAGRIPVLVGGSGLYVRAVLDNLAFPGTDPGVRARWEEELARVGAPALHDRLAARAPQAAAAILPSNGRRIVRALEVVELTGTFTATLPEHRSVYEVVQIGVDRPDLDQRIADRVEKMWGAGFPDEVRRLVECGLREGRTASRALGYAQVLAWFDGAMDSAEQAKLATITATRRFARRQRSWFRRDNRIAWLDQPDVTQVRRLVGSL</sequence>
<accession>Q2J773</accession>
<proteinExistence type="inferred from homology"/>
<reference key="1">
    <citation type="journal article" date="2007" name="Genome Res.">
        <title>Genome characteristics of facultatively symbiotic Frankia sp. strains reflect host range and host plant biogeography.</title>
        <authorList>
            <person name="Normand P."/>
            <person name="Lapierre P."/>
            <person name="Tisa L.S."/>
            <person name="Gogarten J.P."/>
            <person name="Alloisio N."/>
            <person name="Bagnarol E."/>
            <person name="Bassi C.A."/>
            <person name="Berry A.M."/>
            <person name="Bickhart D.M."/>
            <person name="Choisne N."/>
            <person name="Couloux A."/>
            <person name="Cournoyer B."/>
            <person name="Cruveiller S."/>
            <person name="Daubin V."/>
            <person name="Demange N."/>
            <person name="Francino M.P."/>
            <person name="Goltsman E."/>
            <person name="Huang Y."/>
            <person name="Kopp O.R."/>
            <person name="Labarre L."/>
            <person name="Lapidus A."/>
            <person name="Lavire C."/>
            <person name="Marechal J."/>
            <person name="Martinez M."/>
            <person name="Mastronunzio J.E."/>
            <person name="Mullin B.C."/>
            <person name="Niemann J."/>
            <person name="Pujic P."/>
            <person name="Rawnsley T."/>
            <person name="Rouy Z."/>
            <person name="Schenowitz C."/>
            <person name="Sellstedt A."/>
            <person name="Tavares F."/>
            <person name="Tomkins J.P."/>
            <person name="Vallenet D."/>
            <person name="Valverde C."/>
            <person name="Wall L.G."/>
            <person name="Wang Y."/>
            <person name="Medigue C."/>
            <person name="Benson D.R."/>
        </authorList>
    </citation>
    <scope>NUCLEOTIDE SEQUENCE [LARGE SCALE GENOMIC DNA]</scope>
    <source>
        <strain>DSM 45818 / CECT 9043 / HFP020203 / CcI3</strain>
    </source>
</reference>
<feature type="chain" id="PRO_0000377165" description="tRNA dimethylallyltransferase">
    <location>
        <begin position="1"/>
        <end position="291"/>
    </location>
</feature>
<feature type="region of interest" description="Interaction with substrate tRNA" evidence="1">
    <location>
        <begin position="30"/>
        <end position="33"/>
    </location>
</feature>
<feature type="binding site" evidence="1">
    <location>
        <begin position="5"/>
        <end position="12"/>
    </location>
    <ligand>
        <name>ATP</name>
        <dbReference type="ChEBI" id="CHEBI:30616"/>
    </ligand>
</feature>
<feature type="binding site" evidence="1">
    <location>
        <begin position="7"/>
        <end position="12"/>
    </location>
    <ligand>
        <name>substrate</name>
    </ligand>
</feature>
<feature type="site" description="Interaction with substrate tRNA" evidence="1">
    <location>
        <position position="96"/>
    </location>
</feature>
<feature type="site" description="Interaction with substrate tRNA" evidence="1">
    <location>
        <position position="117"/>
    </location>
</feature>